<proteinExistence type="inferred from homology"/>
<comment type="function">
    <text evidence="1">Functions in the N-end rule pathway of protein degradation where it conjugates Leu, Phe and, less efficiently, Met from aminoacyl-tRNAs to the N-termini of proteins containing an N-terminal arginine or lysine.</text>
</comment>
<comment type="catalytic activity">
    <reaction evidence="1">
        <text>N-terminal L-lysyl-[protein] + L-leucyl-tRNA(Leu) = N-terminal L-leucyl-L-lysyl-[protein] + tRNA(Leu) + H(+)</text>
        <dbReference type="Rhea" id="RHEA:12340"/>
        <dbReference type="Rhea" id="RHEA-COMP:9613"/>
        <dbReference type="Rhea" id="RHEA-COMP:9622"/>
        <dbReference type="Rhea" id="RHEA-COMP:12670"/>
        <dbReference type="Rhea" id="RHEA-COMP:12671"/>
        <dbReference type="ChEBI" id="CHEBI:15378"/>
        <dbReference type="ChEBI" id="CHEBI:65249"/>
        <dbReference type="ChEBI" id="CHEBI:78442"/>
        <dbReference type="ChEBI" id="CHEBI:78494"/>
        <dbReference type="ChEBI" id="CHEBI:133043"/>
        <dbReference type="EC" id="2.3.2.6"/>
    </reaction>
</comment>
<comment type="catalytic activity">
    <reaction evidence="1">
        <text>N-terminal L-arginyl-[protein] + L-leucyl-tRNA(Leu) = N-terminal L-leucyl-L-arginyl-[protein] + tRNA(Leu) + H(+)</text>
        <dbReference type="Rhea" id="RHEA:50416"/>
        <dbReference type="Rhea" id="RHEA-COMP:9613"/>
        <dbReference type="Rhea" id="RHEA-COMP:9622"/>
        <dbReference type="Rhea" id="RHEA-COMP:12672"/>
        <dbReference type="Rhea" id="RHEA-COMP:12673"/>
        <dbReference type="ChEBI" id="CHEBI:15378"/>
        <dbReference type="ChEBI" id="CHEBI:64719"/>
        <dbReference type="ChEBI" id="CHEBI:78442"/>
        <dbReference type="ChEBI" id="CHEBI:78494"/>
        <dbReference type="ChEBI" id="CHEBI:133044"/>
        <dbReference type="EC" id="2.3.2.6"/>
    </reaction>
</comment>
<comment type="catalytic activity">
    <reaction evidence="1">
        <text>L-phenylalanyl-tRNA(Phe) + an N-terminal L-alpha-aminoacyl-[protein] = an N-terminal L-phenylalanyl-L-alpha-aminoacyl-[protein] + tRNA(Phe)</text>
        <dbReference type="Rhea" id="RHEA:43632"/>
        <dbReference type="Rhea" id="RHEA-COMP:9668"/>
        <dbReference type="Rhea" id="RHEA-COMP:9699"/>
        <dbReference type="Rhea" id="RHEA-COMP:10636"/>
        <dbReference type="Rhea" id="RHEA-COMP:10637"/>
        <dbReference type="ChEBI" id="CHEBI:78442"/>
        <dbReference type="ChEBI" id="CHEBI:78531"/>
        <dbReference type="ChEBI" id="CHEBI:78597"/>
        <dbReference type="ChEBI" id="CHEBI:83561"/>
        <dbReference type="EC" id="2.3.2.6"/>
    </reaction>
</comment>
<comment type="subcellular location">
    <subcellularLocation>
        <location evidence="1">Cytoplasm</location>
    </subcellularLocation>
</comment>
<comment type="similarity">
    <text evidence="1">Belongs to the L/F-transferase family.</text>
</comment>
<feature type="chain" id="PRO_1000131952" description="Leucyl/phenylalanyl-tRNA--protein transferase">
    <location>
        <begin position="1"/>
        <end position="236"/>
    </location>
</feature>
<feature type="region of interest" description="Disordered" evidence="2">
    <location>
        <begin position="1"/>
        <end position="22"/>
    </location>
</feature>
<feature type="compositionally biased region" description="Polar residues" evidence="2">
    <location>
        <begin position="1"/>
        <end position="13"/>
    </location>
</feature>
<evidence type="ECO:0000255" key="1">
    <source>
        <dbReference type="HAMAP-Rule" id="MF_00688"/>
    </source>
</evidence>
<evidence type="ECO:0000256" key="2">
    <source>
        <dbReference type="SAM" id="MobiDB-lite"/>
    </source>
</evidence>
<reference key="1">
    <citation type="journal article" date="2008" name="PLoS ONE">
        <title>Environmental adaptation: genomic analysis of the piezotolerant and psychrotolerant deep-sea iron reducing bacterium Shewanella piezotolerans WP3.</title>
        <authorList>
            <person name="Wang F."/>
            <person name="Wang J."/>
            <person name="Jian H."/>
            <person name="Zhang B."/>
            <person name="Li S."/>
            <person name="Wang F."/>
            <person name="Zeng X."/>
            <person name="Gao L."/>
            <person name="Bartlett D.H."/>
            <person name="Yu J."/>
            <person name="Hu S."/>
            <person name="Xiao X."/>
        </authorList>
    </citation>
    <scope>NUCLEOTIDE SEQUENCE [LARGE SCALE GENOMIC DNA]</scope>
    <source>
        <strain>WP3 / JCM 13877</strain>
    </source>
</reference>
<dbReference type="EC" id="2.3.2.6" evidence="1"/>
<dbReference type="EMBL" id="CP000472">
    <property type="protein sequence ID" value="ACJ28636.1"/>
    <property type="molecule type" value="Genomic_DNA"/>
</dbReference>
<dbReference type="RefSeq" id="WP_020912012.1">
    <property type="nucleotide sequence ID" value="NC_011566.1"/>
</dbReference>
<dbReference type="SMR" id="B8CLI5"/>
<dbReference type="STRING" id="225849.swp_1874"/>
<dbReference type="KEGG" id="swp:swp_1874"/>
<dbReference type="eggNOG" id="COG2360">
    <property type="taxonomic scope" value="Bacteria"/>
</dbReference>
<dbReference type="HOGENOM" id="CLU_075045_0_0_6"/>
<dbReference type="OrthoDB" id="9790282at2"/>
<dbReference type="Proteomes" id="UP000000753">
    <property type="component" value="Chromosome"/>
</dbReference>
<dbReference type="GO" id="GO:0005737">
    <property type="term" value="C:cytoplasm"/>
    <property type="evidence" value="ECO:0007669"/>
    <property type="project" value="UniProtKB-SubCell"/>
</dbReference>
<dbReference type="GO" id="GO:0008914">
    <property type="term" value="F:leucyl-tRNA--protein transferase activity"/>
    <property type="evidence" value="ECO:0007669"/>
    <property type="project" value="UniProtKB-UniRule"/>
</dbReference>
<dbReference type="GO" id="GO:0030163">
    <property type="term" value="P:protein catabolic process"/>
    <property type="evidence" value="ECO:0007669"/>
    <property type="project" value="UniProtKB-UniRule"/>
</dbReference>
<dbReference type="FunFam" id="3.30.70.3550:FF:000001">
    <property type="entry name" value="Leucyl/phenylalanyl-tRNA--protein transferase"/>
    <property type="match status" value="1"/>
</dbReference>
<dbReference type="FunFam" id="3.40.630.70:FF:000001">
    <property type="entry name" value="Leucyl/phenylalanyl-tRNA--protein transferase"/>
    <property type="match status" value="1"/>
</dbReference>
<dbReference type="Gene3D" id="3.40.630.70">
    <property type="entry name" value="Leucyl/phenylalanyl-tRNA-protein transferase, C-terminal domain"/>
    <property type="match status" value="1"/>
</dbReference>
<dbReference type="Gene3D" id="3.30.70.3550">
    <property type="entry name" value="Leucyl/phenylalanyl-tRNA-protein transferase, N-terminal domain"/>
    <property type="match status" value="1"/>
</dbReference>
<dbReference type="HAMAP" id="MF_00688">
    <property type="entry name" value="Leu_Phe_trans"/>
    <property type="match status" value="1"/>
</dbReference>
<dbReference type="InterPro" id="IPR016181">
    <property type="entry name" value="Acyl_CoA_acyltransferase"/>
</dbReference>
<dbReference type="InterPro" id="IPR004616">
    <property type="entry name" value="Leu/Phe-tRNA_Trfase"/>
</dbReference>
<dbReference type="InterPro" id="IPR042203">
    <property type="entry name" value="Leu/Phe-tRNA_Trfase_C"/>
</dbReference>
<dbReference type="InterPro" id="IPR042221">
    <property type="entry name" value="Leu/Phe-tRNA_Trfase_N"/>
</dbReference>
<dbReference type="NCBIfam" id="TIGR00667">
    <property type="entry name" value="aat"/>
    <property type="match status" value="1"/>
</dbReference>
<dbReference type="PANTHER" id="PTHR30098">
    <property type="entry name" value="LEUCYL/PHENYLALANYL-TRNA--PROTEIN TRANSFERASE"/>
    <property type="match status" value="1"/>
</dbReference>
<dbReference type="PANTHER" id="PTHR30098:SF2">
    <property type="entry name" value="LEUCYL_PHENYLALANYL-TRNA--PROTEIN TRANSFERASE"/>
    <property type="match status" value="1"/>
</dbReference>
<dbReference type="Pfam" id="PF03588">
    <property type="entry name" value="Leu_Phe_trans"/>
    <property type="match status" value="1"/>
</dbReference>
<dbReference type="SUPFAM" id="SSF55729">
    <property type="entry name" value="Acyl-CoA N-acyltransferases (Nat)"/>
    <property type="match status" value="1"/>
</dbReference>
<protein>
    <recommendedName>
        <fullName evidence="1">Leucyl/phenylalanyl-tRNA--protein transferase</fullName>
        <ecNumber evidence="1">2.3.2.6</ecNumber>
    </recommendedName>
    <alternativeName>
        <fullName evidence="1">L/F-transferase</fullName>
    </alternativeName>
    <alternativeName>
        <fullName evidence="1">Leucyltransferase</fullName>
    </alternativeName>
    <alternativeName>
        <fullName evidence="1">Phenyalanyltransferase</fullName>
    </alternativeName>
</protein>
<accession>B8CLI5</accession>
<keyword id="KW-0012">Acyltransferase</keyword>
<keyword id="KW-0963">Cytoplasm</keyword>
<keyword id="KW-0808">Transferase</keyword>
<gene>
    <name evidence="1" type="primary">aat</name>
    <name type="ordered locus">swp_1874</name>
</gene>
<sequence length="236" mass="26664">MNSLSYLNQDQQSFPPPEQALSDPNGLLAVGGDLQPERLLNAYYNGIFPWFNQDDPILWWSPDPRAVFAPGNLRVSRSLIKYLKKQSWTFSINKQFPAVIRGCAAPRAKQEETWISDDIQQAYLSLHQQGHAHSIEVWEDDILIGGLYGLAIGQVFCGESMFHLRTNASKAAMIVLQQHLLRCGFKLIDAQVENPHLDSLGAKSIKRKDFLTLLKHLRDGDVNPDSWLTTEVPIEL</sequence>
<organism>
    <name type="scientific">Shewanella piezotolerans (strain WP3 / JCM 13877)</name>
    <dbReference type="NCBI Taxonomy" id="225849"/>
    <lineage>
        <taxon>Bacteria</taxon>
        <taxon>Pseudomonadati</taxon>
        <taxon>Pseudomonadota</taxon>
        <taxon>Gammaproteobacteria</taxon>
        <taxon>Alteromonadales</taxon>
        <taxon>Shewanellaceae</taxon>
        <taxon>Shewanella</taxon>
    </lineage>
</organism>
<name>LFTR_SHEPW</name>